<comment type="function">
    <text evidence="1">Phosphorolytic 3'-5' exoribonuclease that plays an important role in tRNA 3'-end maturation. Removes nucleotide residues following the 3'-CCA terminus of tRNAs; can also add nucleotides to the ends of RNA molecules by using nucleoside diphosphates as substrates, but this may not be physiologically important. Probably plays a role in initiation of 16S rRNA degradation (leading to ribosome degradation) during starvation.</text>
</comment>
<comment type="catalytic activity">
    <reaction evidence="1">
        <text>tRNA(n+1) + phosphate = tRNA(n) + a ribonucleoside 5'-diphosphate</text>
        <dbReference type="Rhea" id="RHEA:10628"/>
        <dbReference type="Rhea" id="RHEA-COMP:17343"/>
        <dbReference type="Rhea" id="RHEA-COMP:17344"/>
        <dbReference type="ChEBI" id="CHEBI:43474"/>
        <dbReference type="ChEBI" id="CHEBI:57930"/>
        <dbReference type="ChEBI" id="CHEBI:173114"/>
        <dbReference type="EC" id="2.7.7.56"/>
    </reaction>
</comment>
<comment type="subunit">
    <text evidence="1">Homohexameric ring arranged as a trimer of dimers.</text>
</comment>
<comment type="similarity">
    <text evidence="1">Belongs to the RNase PH family.</text>
</comment>
<keyword id="KW-0548">Nucleotidyltransferase</keyword>
<keyword id="KW-1185">Reference proteome</keyword>
<keyword id="KW-0694">RNA-binding</keyword>
<keyword id="KW-0698">rRNA processing</keyword>
<keyword id="KW-0808">Transferase</keyword>
<keyword id="KW-0819">tRNA processing</keyword>
<keyword id="KW-0820">tRNA-binding</keyword>
<proteinExistence type="inferred from homology"/>
<organism>
    <name type="scientific">Xylella fastidiosa (strain Temecula1 / ATCC 700964)</name>
    <dbReference type="NCBI Taxonomy" id="183190"/>
    <lineage>
        <taxon>Bacteria</taxon>
        <taxon>Pseudomonadati</taxon>
        <taxon>Pseudomonadota</taxon>
        <taxon>Gammaproteobacteria</taxon>
        <taxon>Lysobacterales</taxon>
        <taxon>Lysobacteraceae</taxon>
        <taxon>Xylella</taxon>
    </lineage>
</organism>
<reference key="1">
    <citation type="journal article" date="2003" name="J. Bacteriol.">
        <title>Comparative analyses of the complete genome sequences of Pierce's disease and citrus variegated chlorosis strains of Xylella fastidiosa.</title>
        <authorList>
            <person name="Van Sluys M.A."/>
            <person name="de Oliveira M.C."/>
            <person name="Monteiro-Vitorello C.B."/>
            <person name="Miyaki C.Y."/>
            <person name="Furlan L.R."/>
            <person name="Camargo L.E.A."/>
            <person name="da Silva A.C.R."/>
            <person name="Moon D.H."/>
            <person name="Takita M.A."/>
            <person name="Lemos E.G.M."/>
            <person name="Machado M.A."/>
            <person name="Ferro M.I.T."/>
            <person name="da Silva F.R."/>
            <person name="Goldman M.H.S."/>
            <person name="Goldman G.H."/>
            <person name="Lemos M.V.F."/>
            <person name="El-Dorry H."/>
            <person name="Tsai S.M."/>
            <person name="Carrer H."/>
            <person name="Carraro D.M."/>
            <person name="de Oliveira R.C."/>
            <person name="Nunes L.R."/>
            <person name="Siqueira W.J."/>
            <person name="Coutinho L.L."/>
            <person name="Kimura E.T."/>
            <person name="Ferro E.S."/>
            <person name="Harakava R."/>
            <person name="Kuramae E.E."/>
            <person name="Marino C.L."/>
            <person name="Giglioti E."/>
            <person name="Abreu I.L."/>
            <person name="Alves L.M.C."/>
            <person name="do Amaral A.M."/>
            <person name="Baia G.S."/>
            <person name="Blanco S.R."/>
            <person name="Brito M.S."/>
            <person name="Cannavan F.S."/>
            <person name="Celestino A.V."/>
            <person name="da Cunha A.F."/>
            <person name="Fenille R.C."/>
            <person name="Ferro J.A."/>
            <person name="Formighieri E.F."/>
            <person name="Kishi L.T."/>
            <person name="Leoni S.G."/>
            <person name="Oliveira A.R."/>
            <person name="Rosa V.E. Jr."/>
            <person name="Sassaki F.T."/>
            <person name="Sena J.A.D."/>
            <person name="de Souza A.A."/>
            <person name="Truffi D."/>
            <person name="Tsukumo F."/>
            <person name="Yanai G.M."/>
            <person name="Zaros L.G."/>
            <person name="Civerolo E.L."/>
            <person name="Simpson A.J.G."/>
            <person name="Almeida N.F. Jr."/>
            <person name="Setubal J.C."/>
            <person name="Kitajima J.P."/>
        </authorList>
    </citation>
    <scope>NUCLEOTIDE SEQUENCE [LARGE SCALE GENOMIC DNA]</scope>
    <source>
        <strain>Temecula1 / ATCC 700964</strain>
    </source>
</reference>
<protein>
    <recommendedName>
        <fullName evidence="1">Ribonuclease PH</fullName>
        <shortName evidence="1">RNase PH</shortName>
        <ecNumber evidence="1">2.7.7.56</ecNumber>
    </recommendedName>
    <alternativeName>
        <fullName evidence="1">tRNA nucleotidyltransferase</fullName>
    </alternativeName>
</protein>
<evidence type="ECO:0000255" key="1">
    <source>
        <dbReference type="HAMAP-Rule" id="MF_00564"/>
    </source>
</evidence>
<dbReference type="EC" id="2.7.7.56" evidence="1"/>
<dbReference type="EMBL" id="AE009442">
    <property type="protein sequence ID" value="AAO28591.1"/>
    <property type="molecule type" value="Genomic_DNA"/>
</dbReference>
<dbReference type="RefSeq" id="WP_004083697.1">
    <property type="nucleotide sequence ID" value="NC_004556.1"/>
</dbReference>
<dbReference type="SMR" id="Q87DG3"/>
<dbReference type="GeneID" id="93904502"/>
<dbReference type="KEGG" id="xft:PD_0722"/>
<dbReference type="HOGENOM" id="CLU_050858_0_0_6"/>
<dbReference type="Proteomes" id="UP000002516">
    <property type="component" value="Chromosome"/>
</dbReference>
<dbReference type="GO" id="GO:0000175">
    <property type="term" value="F:3'-5'-RNA exonuclease activity"/>
    <property type="evidence" value="ECO:0007669"/>
    <property type="project" value="UniProtKB-UniRule"/>
</dbReference>
<dbReference type="GO" id="GO:0000049">
    <property type="term" value="F:tRNA binding"/>
    <property type="evidence" value="ECO:0007669"/>
    <property type="project" value="UniProtKB-UniRule"/>
</dbReference>
<dbReference type="GO" id="GO:0009022">
    <property type="term" value="F:tRNA nucleotidyltransferase activity"/>
    <property type="evidence" value="ECO:0007669"/>
    <property type="project" value="UniProtKB-UniRule"/>
</dbReference>
<dbReference type="GO" id="GO:0016075">
    <property type="term" value="P:rRNA catabolic process"/>
    <property type="evidence" value="ECO:0007669"/>
    <property type="project" value="UniProtKB-UniRule"/>
</dbReference>
<dbReference type="GO" id="GO:0006364">
    <property type="term" value="P:rRNA processing"/>
    <property type="evidence" value="ECO:0007669"/>
    <property type="project" value="UniProtKB-KW"/>
</dbReference>
<dbReference type="GO" id="GO:0008033">
    <property type="term" value="P:tRNA processing"/>
    <property type="evidence" value="ECO:0007669"/>
    <property type="project" value="UniProtKB-UniRule"/>
</dbReference>
<dbReference type="CDD" id="cd11362">
    <property type="entry name" value="RNase_PH_bact"/>
    <property type="match status" value="1"/>
</dbReference>
<dbReference type="FunFam" id="3.30.230.70:FF:000003">
    <property type="entry name" value="Ribonuclease PH"/>
    <property type="match status" value="1"/>
</dbReference>
<dbReference type="Gene3D" id="3.30.230.70">
    <property type="entry name" value="GHMP Kinase, N-terminal domain"/>
    <property type="match status" value="1"/>
</dbReference>
<dbReference type="HAMAP" id="MF_00564">
    <property type="entry name" value="RNase_PH"/>
    <property type="match status" value="1"/>
</dbReference>
<dbReference type="InterPro" id="IPR001247">
    <property type="entry name" value="ExoRNase_PH_dom1"/>
</dbReference>
<dbReference type="InterPro" id="IPR015847">
    <property type="entry name" value="ExoRNase_PH_dom2"/>
</dbReference>
<dbReference type="InterPro" id="IPR036345">
    <property type="entry name" value="ExoRNase_PH_dom2_sf"/>
</dbReference>
<dbReference type="InterPro" id="IPR027408">
    <property type="entry name" value="PNPase/RNase_PH_dom_sf"/>
</dbReference>
<dbReference type="InterPro" id="IPR020568">
    <property type="entry name" value="Ribosomal_Su5_D2-typ_SF"/>
</dbReference>
<dbReference type="InterPro" id="IPR050080">
    <property type="entry name" value="RNase_PH"/>
</dbReference>
<dbReference type="InterPro" id="IPR002381">
    <property type="entry name" value="RNase_PH_bac-type"/>
</dbReference>
<dbReference type="InterPro" id="IPR018336">
    <property type="entry name" value="RNase_PH_CS"/>
</dbReference>
<dbReference type="NCBIfam" id="TIGR01966">
    <property type="entry name" value="RNasePH"/>
    <property type="match status" value="1"/>
</dbReference>
<dbReference type="PANTHER" id="PTHR11953">
    <property type="entry name" value="EXOSOME COMPLEX COMPONENT"/>
    <property type="match status" value="1"/>
</dbReference>
<dbReference type="PANTHER" id="PTHR11953:SF0">
    <property type="entry name" value="EXOSOME COMPLEX COMPONENT RRP41"/>
    <property type="match status" value="1"/>
</dbReference>
<dbReference type="Pfam" id="PF01138">
    <property type="entry name" value="RNase_PH"/>
    <property type="match status" value="1"/>
</dbReference>
<dbReference type="Pfam" id="PF03725">
    <property type="entry name" value="RNase_PH_C"/>
    <property type="match status" value="1"/>
</dbReference>
<dbReference type="SUPFAM" id="SSF55666">
    <property type="entry name" value="Ribonuclease PH domain 2-like"/>
    <property type="match status" value="1"/>
</dbReference>
<dbReference type="SUPFAM" id="SSF54211">
    <property type="entry name" value="Ribosomal protein S5 domain 2-like"/>
    <property type="match status" value="1"/>
</dbReference>
<dbReference type="PROSITE" id="PS01277">
    <property type="entry name" value="RIBONUCLEASE_PH"/>
    <property type="match status" value="1"/>
</dbReference>
<gene>
    <name evidence="1" type="primary">rph</name>
    <name type="ordered locus">PD_0722</name>
</gene>
<sequence>MNVSRPSGRQADALRPVRIERAFTCHAEGSVLVSFGNTLVVCTASVEAKVPVFLRNKGEGWITAEYGMLPRSTHTRSEREAARGKQAGRTLEIQRLIGRALRTCVDRTALGERTITLDCDVLQADGGTRTAAITGAYVALVDAVRCLEQRGQLKKSPLIGAVAAVSVGIYRGMPVLDLDYPEDSDCDTDMNVVMNDEGGFIELQGTAEQQAFRRGELDMLLALAERGTAMLFDIQREALAR</sequence>
<name>RNPH_XYLFT</name>
<accession>Q87DG3</accession>
<feature type="chain" id="PRO_0000139954" description="Ribonuclease PH">
    <location>
        <begin position="1"/>
        <end position="241"/>
    </location>
</feature>
<feature type="binding site" evidence="1">
    <location>
        <position position="89"/>
    </location>
    <ligand>
        <name>phosphate</name>
        <dbReference type="ChEBI" id="CHEBI:43474"/>
        <note>substrate</note>
    </ligand>
</feature>
<feature type="binding site" evidence="1">
    <location>
        <begin position="127"/>
        <end position="129"/>
    </location>
    <ligand>
        <name>phosphate</name>
        <dbReference type="ChEBI" id="CHEBI:43474"/>
        <note>substrate</note>
    </ligand>
</feature>